<keyword id="KW-0008">Acetylcholine receptor inhibiting toxin</keyword>
<keyword id="KW-0027">Amidation</keyword>
<keyword id="KW-0108">Calcium channel impairing toxin</keyword>
<keyword id="KW-0165">Cleavage on pair of basic residues</keyword>
<keyword id="KW-1015">Disulfide bond</keyword>
<keyword id="KW-0872">Ion channel impairing toxin</keyword>
<keyword id="KW-0528">Neurotoxin</keyword>
<keyword id="KW-0582">Pharmaceutical</keyword>
<keyword id="KW-0629">Postsynaptic neurotoxin</keyword>
<keyword id="KW-0964">Secreted</keyword>
<keyword id="KW-0732">Signal</keyword>
<keyword id="KW-0800">Toxin</keyword>
<keyword id="KW-1218">Voltage-gated calcium channel impairing toxin</keyword>
<reference key="1">
    <citation type="journal article" date="2018" name="Sci. Rep.">
        <title>A novel alpha-conopeptide Eu1.6 inhibits N-type (CaV2.2) calcium channels and exhibits potent analgesic activity.</title>
        <authorList>
            <person name="Liu Z."/>
            <person name="Bartels P."/>
            <person name="Sadeghi M."/>
            <person name="Du T."/>
            <person name="Dai Q."/>
            <person name="Zhu C."/>
            <person name="Yu S."/>
            <person name="Wang S."/>
            <person name="Dong M."/>
            <person name="Sun T."/>
            <person name="Guo J."/>
            <person name="Peng S."/>
            <person name="Jiang L."/>
            <person name="Adams D.J."/>
            <person name="Dai Q."/>
        </authorList>
    </citation>
    <scope>NUCLEOTIDE SEQUENCE [MRNA]</scope>
    <scope>SYNTHESIS OF AMIDATED PEPTIDE</scope>
    <scope>STRUCTURE BY NMR OF 48-63</scope>
    <scope>BIOASSAY</scope>
    <scope>PHARMACEUTICAL</scope>
</reference>
<dbReference type="EMBL" id="HQ446467">
    <property type="protein sequence ID" value="ADZ76589.1"/>
    <property type="molecule type" value="mRNA"/>
</dbReference>
<dbReference type="SMR" id="F2XFS9"/>
<dbReference type="GO" id="GO:0005576">
    <property type="term" value="C:extracellular region"/>
    <property type="evidence" value="ECO:0007669"/>
    <property type="project" value="UniProtKB-SubCell"/>
</dbReference>
<dbReference type="GO" id="GO:0035792">
    <property type="term" value="C:host cell postsynaptic membrane"/>
    <property type="evidence" value="ECO:0007669"/>
    <property type="project" value="UniProtKB-KW"/>
</dbReference>
<dbReference type="GO" id="GO:0030550">
    <property type="term" value="F:acetylcholine receptor inhibitor activity"/>
    <property type="evidence" value="ECO:0007669"/>
    <property type="project" value="UniProtKB-KW"/>
</dbReference>
<dbReference type="GO" id="GO:0005246">
    <property type="term" value="F:calcium channel regulator activity"/>
    <property type="evidence" value="ECO:0007669"/>
    <property type="project" value="UniProtKB-KW"/>
</dbReference>
<dbReference type="GO" id="GO:0090729">
    <property type="term" value="F:toxin activity"/>
    <property type="evidence" value="ECO:0007669"/>
    <property type="project" value="UniProtKB-KW"/>
</dbReference>
<dbReference type="InterPro" id="IPR009958">
    <property type="entry name" value="Conotoxin_a-typ"/>
</dbReference>
<dbReference type="InterPro" id="IPR018072">
    <property type="entry name" value="Conotoxin_a-typ_CS"/>
</dbReference>
<dbReference type="Pfam" id="PF07365">
    <property type="entry name" value="Toxin_8"/>
    <property type="match status" value="1"/>
</dbReference>
<dbReference type="PROSITE" id="PS60014">
    <property type="entry name" value="ALPHA_CONOTOXIN"/>
    <property type="match status" value="1"/>
</dbReference>
<protein>
    <recommendedName>
        <fullName evidence="5">Omega-conotoxin Eu1.6</fullName>
    </recommendedName>
    <alternativeName>
        <fullName evidence="4">Alpha-conopeptide Eu1.6</fullName>
    </alternativeName>
    <alternativeName>
        <fullName evidence="7">Alpha-conotoxin Eb1.6</fullName>
    </alternativeName>
</protein>
<proteinExistence type="evidence at protein level"/>
<accession>F2XFS9</accession>
<sequence>MGMRMMFTVFLLVVLATTVVSFTSDRAPDGRNAAAKAFGLITPTVRKGCCSNPACMLKNPNLC</sequence>
<organism>
    <name type="scientific">Conus eburneus</name>
    <name type="common">Ivory cone</name>
    <dbReference type="NCBI Taxonomy" id="101300"/>
    <lineage>
        <taxon>Eukaryota</taxon>
        <taxon>Metazoa</taxon>
        <taxon>Spiralia</taxon>
        <taxon>Lophotrochozoa</taxon>
        <taxon>Mollusca</taxon>
        <taxon>Gastropoda</taxon>
        <taxon>Caenogastropoda</taxon>
        <taxon>Neogastropoda</taxon>
        <taxon>Conoidea</taxon>
        <taxon>Conidae</taxon>
        <taxon>Conus</taxon>
        <taxon>Tesselliconus</taxon>
    </lineage>
</organism>
<evidence type="ECO:0000250" key="1">
    <source>
        <dbReference type="UniProtKB" id="P56636"/>
    </source>
</evidence>
<evidence type="ECO:0000255" key="2"/>
<evidence type="ECO:0000269" key="3">
    <source>
    </source>
</evidence>
<evidence type="ECO:0000303" key="4">
    <source>
    </source>
</evidence>
<evidence type="ECO:0000305" key="5"/>
<evidence type="ECO:0000305" key="6">
    <source>
    </source>
</evidence>
<evidence type="ECO:0000312" key="7">
    <source>
        <dbReference type="EMBL" id="ADZ76589.1"/>
    </source>
</evidence>
<comment type="function">
    <text evidence="3">This amidated peptide potently and teversibly inhibits Cav2.2/CACNA1B. Steady-state inactivation is enhanced at hyperpolarized membrane potentials. Also shows a weak interaction at alpha-3-beta-4/ CHRNA3-CHRNB4 and alpha-7/CHRNA7 nAChRs subtypes. In vivo, exhibits a potent analgesic activity in rat partial sciatic nerve injury and chronic constriction injury models.</text>
</comment>
<comment type="subcellular location">
    <subcellularLocation>
        <location evidence="6">Secreted</location>
    </subcellularLocation>
</comment>
<comment type="tissue specificity">
    <text evidence="6">Expressed by the venom duct.</text>
</comment>
<comment type="domain">
    <text evidence="5">The cysteine framework is I (CC-C-C). Alpha4/7 pattern.</text>
</comment>
<comment type="pharmaceutical">
    <text evidence="6">Has been suggested to be a promising drug candidate for the treatment of neuropathic pain.</text>
</comment>
<comment type="miscellaneous">
    <text evidence="3">Negative results: shows a very weak inhibition of tetrodotoxin (TTX)-resistant sodium channels. Does not show activity at TTX-sensitive sodium channels, L- or T-type calcium channels, opioid receptors, TRPV1 and KCNQ1 channels. In vivo, does not exhibit any significant side-effects for spontaneous locomotor activity, cardiac and respiratory function and drug dependence.</text>
</comment>
<comment type="similarity">
    <text evidence="5">Belongs to the conotoxin A superfamily.</text>
</comment>
<comment type="caution">
    <text evidence="5">A C-terminal amidation at Cys-63 is suggested by authors, despite the lack of Gly residue at position 64 which should provide the amino group (-NH2).</text>
</comment>
<name>CA16_CONEB</name>
<feature type="signal peptide" evidence="2">
    <location>
        <begin position="1"/>
        <end position="21"/>
    </location>
</feature>
<feature type="propeptide" id="PRO_0000450816" evidence="6">
    <location>
        <begin position="22"/>
        <end position="47"/>
    </location>
</feature>
<feature type="peptide" id="PRO_5003289307" description="Omega-conotoxin Eu1.6" evidence="6">
    <location>
        <begin position="48"/>
        <end position="63"/>
    </location>
</feature>
<feature type="region of interest" description="Ser-Xaa-Pro motif, crucial for potent interaction with nAChR" evidence="1">
    <location>
        <begin position="51"/>
        <end position="53"/>
    </location>
</feature>
<feature type="disulfide bond" evidence="6">
    <location>
        <begin position="49"/>
        <end position="55"/>
    </location>
</feature>
<feature type="disulfide bond" evidence="6">
    <location>
        <begin position="50"/>
        <end position="63"/>
    </location>
</feature>